<organism>
    <name type="scientific">Solanum lycopersicum</name>
    <name type="common">Tomato</name>
    <name type="synonym">Lycopersicon esculentum</name>
    <dbReference type="NCBI Taxonomy" id="4081"/>
    <lineage>
        <taxon>Eukaryota</taxon>
        <taxon>Viridiplantae</taxon>
        <taxon>Streptophyta</taxon>
        <taxon>Embryophyta</taxon>
        <taxon>Tracheophyta</taxon>
        <taxon>Spermatophyta</taxon>
        <taxon>Magnoliopsida</taxon>
        <taxon>eudicotyledons</taxon>
        <taxon>Gunneridae</taxon>
        <taxon>Pentapetalae</taxon>
        <taxon>asterids</taxon>
        <taxon>lamiids</taxon>
        <taxon>Solanales</taxon>
        <taxon>Solanaceae</taxon>
        <taxon>Solanoideae</taxon>
        <taxon>Solaneae</taxon>
        <taxon>Solanum</taxon>
        <taxon>Solanum subgen. Lycopersicon</taxon>
    </lineage>
</organism>
<accession>Q2MIA6</accession>
<evidence type="ECO:0000255" key="1">
    <source>
        <dbReference type="HAMAP-Rule" id="MF_00438"/>
    </source>
</evidence>
<gene>
    <name evidence="1" type="primary">psbM</name>
</gene>
<keyword id="KW-0150">Chloroplast</keyword>
<keyword id="KW-0472">Membrane</keyword>
<keyword id="KW-0602">Photosynthesis</keyword>
<keyword id="KW-0604">Photosystem II</keyword>
<keyword id="KW-0934">Plastid</keyword>
<keyword id="KW-0674">Reaction center</keyword>
<keyword id="KW-1185">Reference proteome</keyword>
<keyword id="KW-0793">Thylakoid</keyword>
<keyword id="KW-0812">Transmembrane</keyword>
<keyword id="KW-1133">Transmembrane helix</keyword>
<name>PSBM_SOLLC</name>
<sequence>MEVNILAFIATALFILVPTAFLLIIYVKTVSQND</sequence>
<reference key="1">
    <citation type="journal article" date="2006" name="Theor. Appl. Genet.">
        <title>Complete chloroplast genome sequences of Solanum bulbocastanum, Solanum lycopersicum and comparative analyses with other Solanaceae genomes.</title>
        <authorList>
            <person name="Daniell H."/>
            <person name="Lee S.-B."/>
            <person name="Grevich J."/>
            <person name="Saski C."/>
            <person name="Quesada-Vargas T."/>
            <person name="Guda C."/>
            <person name="Tomkins J."/>
            <person name="Jansen R.K."/>
        </authorList>
    </citation>
    <scope>NUCLEOTIDE SEQUENCE [LARGE SCALE GENOMIC DNA]</scope>
    <source>
        <strain>cv. LA3023</strain>
    </source>
</reference>
<reference key="2">
    <citation type="journal article" date="2006" name="J. Mol. Evol.">
        <title>Sequence of the tomato chloroplast DNA and evolutionary comparison of solanaceous plastid genomes.</title>
        <authorList>
            <person name="Kahlau S."/>
            <person name="Aspinall S."/>
            <person name="Gray J.C."/>
            <person name="Bock R."/>
        </authorList>
    </citation>
    <scope>NUCLEOTIDE SEQUENCE [LARGE SCALE GENOMIC DNA]</scope>
    <source>
        <strain>cv. IPA-6</strain>
    </source>
</reference>
<dbReference type="EMBL" id="DQ347959">
    <property type="protein sequence ID" value="ABC56294.1"/>
    <property type="molecule type" value="Genomic_DNA"/>
</dbReference>
<dbReference type="EMBL" id="AM087200">
    <property type="protein sequence ID" value="CAJ32387.1"/>
    <property type="molecule type" value="Genomic_DNA"/>
</dbReference>
<dbReference type="RefSeq" id="AP_004922.1">
    <property type="nucleotide sequence ID" value="AC_000188.1"/>
</dbReference>
<dbReference type="RefSeq" id="YP_008563082.1">
    <property type="nucleotide sequence ID" value="NC_007898.3"/>
</dbReference>
<dbReference type="SMR" id="Q2MIA6"/>
<dbReference type="FunCoup" id="Q2MIA6">
    <property type="interactions" value="31"/>
</dbReference>
<dbReference type="STRING" id="4081.Q2MIA6"/>
<dbReference type="PaxDb" id="4081-Solyc09g064580.2.1"/>
<dbReference type="GeneID" id="3950485"/>
<dbReference type="KEGG" id="sly:3950485"/>
<dbReference type="eggNOG" id="ENOG502SD7U">
    <property type="taxonomic scope" value="Eukaryota"/>
</dbReference>
<dbReference type="InParanoid" id="Q2MIA6"/>
<dbReference type="OrthoDB" id="564131at2759"/>
<dbReference type="Proteomes" id="UP000004994">
    <property type="component" value="Chloroplast"/>
</dbReference>
<dbReference type="GO" id="GO:0009535">
    <property type="term" value="C:chloroplast thylakoid membrane"/>
    <property type="evidence" value="ECO:0007669"/>
    <property type="project" value="UniProtKB-SubCell"/>
</dbReference>
<dbReference type="GO" id="GO:0009523">
    <property type="term" value="C:photosystem II"/>
    <property type="evidence" value="ECO:0007669"/>
    <property type="project" value="UniProtKB-KW"/>
</dbReference>
<dbReference type="GO" id="GO:0019684">
    <property type="term" value="P:photosynthesis, light reaction"/>
    <property type="evidence" value="ECO:0007669"/>
    <property type="project" value="InterPro"/>
</dbReference>
<dbReference type="HAMAP" id="MF_00438">
    <property type="entry name" value="PSII_PsbM"/>
    <property type="match status" value="1"/>
</dbReference>
<dbReference type="InterPro" id="IPR007826">
    <property type="entry name" value="PSII_PsbM"/>
</dbReference>
<dbReference type="InterPro" id="IPR037269">
    <property type="entry name" value="PSII_PsbM_sf"/>
</dbReference>
<dbReference type="NCBIfam" id="TIGR03038">
    <property type="entry name" value="PS_II_psbM"/>
    <property type="match status" value="1"/>
</dbReference>
<dbReference type="PANTHER" id="PTHR35774">
    <property type="entry name" value="PHOTOSYSTEM II REACTION CENTER PROTEIN M"/>
    <property type="match status" value="1"/>
</dbReference>
<dbReference type="PANTHER" id="PTHR35774:SF1">
    <property type="entry name" value="PHOTOSYSTEM II REACTION CENTER PROTEIN M"/>
    <property type="match status" value="1"/>
</dbReference>
<dbReference type="Pfam" id="PF05151">
    <property type="entry name" value="PsbM"/>
    <property type="match status" value="1"/>
</dbReference>
<dbReference type="SUPFAM" id="SSF161033">
    <property type="entry name" value="Photosystem II reaction center protein M, PsbM"/>
    <property type="match status" value="1"/>
</dbReference>
<proteinExistence type="inferred from homology"/>
<protein>
    <recommendedName>
        <fullName evidence="1">Photosystem II reaction center protein M</fullName>
        <shortName evidence="1">PSII-M</shortName>
    </recommendedName>
</protein>
<geneLocation type="chloroplast"/>
<feature type="chain" id="PRO_0000276256" description="Photosystem II reaction center protein M">
    <location>
        <begin position="1"/>
        <end position="34"/>
    </location>
</feature>
<feature type="transmembrane region" description="Helical" evidence="1">
    <location>
        <begin position="5"/>
        <end position="25"/>
    </location>
</feature>
<comment type="function">
    <text evidence="1">One of the components of the core complex of photosystem II (PSII). PSII is a light-driven water:plastoquinone oxidoreductase that uses light energy to abstract electrons from H(2)O, generating O(2) and a proton gradient subsequently used for ATP formation. It consists of a core antenna complex that captures photons, and an electron transfer chain that converts photonic excitation into a charge separation. This subunit is found at the monomer-monomer interface.</text>
</comment>
<comment type="subunit">
    <text evidence="1">PSII is composed of 1 copy each of membrane proteins PsbA, PsbB, PsbC, PsbD, PsbE, PsbF, PsbH, PsbI, PsbJ, PsbK, PsbL, PsbM, PsbT, PsbX, PsbY, PsbZ, Psb30/Ycf12, at least 3 peripheral proteins of the oxygen-evolving complex and a large number of cofactors. It forms dimeric complexes.</text>
</comment>
<comment type="subcellular location">
    <subcellularLocation>
        <location evidence="1">Plastid</location>
        <location evidence="1">Chloroplast thylakoid membrane</location>
        <topology evidence="1">Single-pass membrane protein</topology>
    </subcellularLocation>
</comment>
<comment type="similarity">
    <text evidence="1">Belongs to the PsbM family.</text>
</comment>